<gene>
    <name evidence="1" type="primary">hel308</name>
    <name type="ordered locus">APE_0191.1</name>
</gene>
<feature type="chain" id="PRO_0000102103" description="ATP-dependent DNA helicase Hel308">
    <location>
        <begin position="1"/>
        <end position="735"/>
    </location>
</feature>
<feature type="domain" description="Helicase ATP-binding" evidence="1">
    <location>
        <begin position="37"/>
        <end position="201"/>
    </location>
</feature>
<feature type="domain" description="Helicase C-terminal" evidence="1">
    <location>
        <begin position="235"/>
        <end position="431"/>
    </location>
</feature>
<feature type="short sequence motif" description="DEAH box" evidence="1">
    <location>
        <begin position="146"/>
        <end position="149"/>
    </location>
</feature>
<feature type="binding site" evidence="1">
    <location>
        <position position="32"/>
    </location>
    <ligand>
        <name>ATP</name>
        <dbReference type="ChEBI" id="CHEBI:30616"/>
    </ligand>
</feature>
<feature type="binding site" evidence="1">
    <location>
        <begin position="50"/>
        <end position="57"/>
    </location>
    <ligand>
        <name>ATP</name>
        <dbReference type="ChEBI" id="CHEBI:30616"/>
    </ligand>
</feature>
<name>HELS_AERPE</name>
<reference key="1">
    <citation type="journal article" date="1999" name="DNA Res.">
        <title>Complete genome sequence of an aerobic hyper-thermophilic crenarchaeon, Aeropyrum pernix K1.</title>
        <authorList>
            <person name="Kawarabayasi Y."/>
            <person name="Hino Y."/>
            <person name="Horikawa H."/>
            <person name="Yamazaki S."/>
            <person name="Haikawa Y."/>
            <person name="Jin-no K."/>
            <person name="Takahashi M."/>
            <person name="Sekine M."/>
            <person name="Baba S."/>
            <person name="Ankai A."/>
            <person name="Kosugi H."/>
            <person name="Hosoyama A."/>
            <person name="Fukui S."/>
            <person name="Nagai Y."/>
            <person name="Nishijima K."/>
            <person name="Nakazawa H."/>
            <person name="Takamiya M."/>
            <person name="Masuda S."/>
            <person name="Funahashi T."/>
            <person name="Tanaka T."/>
            <person name="Kudoh Y."/>
            <person name="Yamazaki J."/>
            <person name="Kushida N."/>
            <person name="Oguchi A."/>
            <person name="Aoki K."/>
            <person name="Kubota K."/>
            <person name="Nakamura Y."/>
            <person name="Nomura N."/>
            <person name="Sako Y."/>
            <person name="Kikuchi H."/>
        </authorList>
    </citation>
    <scope>NUCLEOTIDE SEQUENCE [LARGE SCALE GENOMIC DNA]</scope>
    <source>
        <strain>ATCC 700893 / DSM 11879 / JCM 9820 / NBRC 100138 / K1</strain>
    </source>
</reference>
<sequence>MSKGLYDIPSWATTETRTLAKLAGVERLFEPQYMALQAGVEKGENLVVAAPTGSGKTFIALVAIVNSLARAGGRAFYLVPLKSVAYEKYTSFSILSRMGLKLKISVGDFREGPPEAPVVIATYEKFDSLLRVSPSLARNVSVLIVDEIHSVSDPKRGPILESIVSRMLASAGEAQLVGLSATVPNAGEIAEWIGGKIVESSWRPVPLREYVFKEYKLYSPTGGLREVPRVYGLYDLDLAAEAIEDGGQALVFTYSRRRAVTLAKRAAKRLGRRLSSREARVYSAEASRAEGAPRSVAEELASLIAAGIAYHHAGLPPSLRKTVEEAFRAGAVKVVYSTPTLAAGVNLPARRVVIDSYYRYEAGFREPIRVAEYKQMAGRAGRPGLDEFGEAIIVAERLDRPEDLISGYIRAPPERVESRLAGLRGLRHFILGIVAPEGEVSIGSIEKVSGLTLYSLQRGLPRETIARAVEDLSAWGLVEVKGWRIAATSLGREVAAVYLDPESVPVFREEVKHLSFDNEFDILYLISTMPDMVRLPATRREEERLLEAILDASPRMLSSVDWLGPEEMAAVKTAVVLKLWIDEASEDTIYGEWGVHTGDLLNMVSTAEWIASGLSRIAPYLGLNSKVSHILSVIARRIKHGVKPELLQLVEIPGVGRVRARILFEAGYRSIEDLATARAEDLMRLPLIGPSTARQILEFLGRVDEAREAEAREMLARKGLLSYLEGDAVAGEEGE</sequence>
<comment type="function">
    <text evidence="1">DNA-dependent ATPase and 3'-5' DNA helicase that may be involved in repair of stalled replication forks.</text>
</comment>
<comment type="catalytic activity">
    <reaction evidence="1">
        <text>Couples ATP hydrolysis with the unwinding of duplex DNA by translocating in the 3'-5' direction.</text>
        <dbReference type="EC" id="5.6.2.4"/>
    </reaction>
</comment>
<comment type="catalytic activity">
    <reaction evidence="1">
        <text>ATP + H2O = ADP + phosphate + H(+)</text>
        <dbReference type="Rhea" id="RHEA:13065"/>
        <dbReference type="ChEBI" id="CHEBI:15377"/>
        <dbReference type="ChEBI" id="CHEBI:15378"/>
        <dbReference type="ChEBI" id="CHEBI:30616"/>
        <dbReference type="ChEBI" id="CHEBI:43474"/>
        <dbReference type="ChEBI" id="CHEBI:456216"/>
        <dbReference type="EC" id="5.6.2.4"/>
    </reaction>
</comment>
<comment type="subunit">
    <text evidence="1">Monomer.</text>
</comment>
<comment type="similarity">
    <text evidence="1">Belongs to the helicase family. Hel308 subfamily.</text>
</comment>
<protein>
    <recommendedName>
        <fullName evidence="1">ATP-dependent DNA helicase Hel308</fullName>
        <ecNumber evidence="1">5.6.2.4</ecNumber>
    </recommendedName>
    <alternativeName>
        <fullName evidence="1">DNA 3'-5' helicase Hel308</fullName>
    </alternativeName>
</protein>
<evidence type="ECO:0000255" key="1">
    <source>
        <dbReference type="HAMAP-Rule" id="MF_00442"/>
    </source>
</evidence>
<accession>Q9YFQ8</accession>
<proteinExistence type="inferred from homology"/>
<dbReference type="EC" id="5.6.2.4" evidence="1"/>
<dbReference type="EMBL" id="BA000002">
    <property type="protein sequence ID" value="BAA79103.2"/>
    <property type="molecule type" value="Genomic_DNA"/>
</dbReference>
<dbReference type="PIR" id="E72775">
    <property type="entry name" value="E72775"/>
</dbReference>
<dbReference type="RefSeq" id="WP_010865557.1">
    <property type="nucleotide sequence ID" value="NC_000854.2"/>
</dbReference>
<dbReference type="SMR" id="Q9YFQ8"/>
<dbReference type="STRING" id="272557.APE_0191.1"/>
<dbReference type="EnsemblBacteria" id="BAA79103">
    <property type="protein sequence ID" value="BAA79103"/>
    <property type="gene ID" value="APE_0191.1"/>
</dbReference>
<dbReference type="GeneID" id="1445716"/>
<dbReference type="KEGG" id="ape:APE_0191.1"/>
<dbReference type="PATRIC" id="fig|272557.25.peg.136"/>
<dbReference type="eggNOG" id="arCOG00553">
    <property type="taxonomic scope" value="Archaea"/>
</dbReference>
<dbReference type="Proteomes" id="UP000002518">
    <property type="component" value="Chromosome"/>
</dbReference>
<dbReference type="GO" id="GO:0043138">
    <property type="term" value="F:3'-5' DNA helicase activity"/>
    <property type="evidence" value="ECO:0007669"/>
    <property type="project" value="UniProtKB-UniRule"/>
</dbReference>
<dbReference type="GO" id="GO:0005524">
    <property type="term" value="F:ATP binding"/>
    <property type="evidence" value="ECO:0007669"/>
    <property type="project" value="UniProtKB-UniRule"/>
</dbReference>
<dbReference type="GO" id="GO:0016887">
    <property type="term" value="F:ATP hydrolysis activity"/>
    <property type="evidence" value="ECO:0007669"/>
    <property type="project" value="InterPro"/>
</dbReference>
<dbReference type="GO" id="GO:0003677">
    <property type="term" value="F:DNA binding"/>
    <property type="evidence" value="ECO:0007669"/>
    <property type="project" value="UniProtKB-UniRule"/>
</dbReference>
<dbReference type="GO" id="GO:0006281">
    <property type="term" value="P:DNA repair"/>
    <property type="evidence" value="ECO:0007669"/>
    <property type="project" value="UniProtKB-UniRule"/>
</dbReference>
<dbReference type="CDD" id="cd18028">
    <property type="entry name" value="DEXHc_archSki2"/>
    <property type="match status" value="1"/>
</dbReference>
<dbReference type="CDD" id="cd18795">
    <property type="entry name" value="SF2_C_Ski2"/>
    <property type="match status" value="1"/>
</dbReference>
<dbReference type="Gene3D" id="1.10.3380.30">
    <property type="match status" value="1"/>
</dbReference>
<dbReference type="Gene3D" id="1.10.150.20">
    <property type="entry name" value="5' to 3' exonuclease, C-terminal subdomain"/>
    <property type="match status" value="1"/>
</dbReference>
<dbReference type="Gene3D" id="3.40.50.300">
    <property type="entry name" value="P-loop containing nucleotide triphosphate hydrolases"/>
    <property type="match status" value="2"/>
</dbReference>
<dbReference type="HAMAP" id="MF_00442">
    <property type="entry name" value="Helicase_Hel308"/>
    <property type="match status" value="1"/>
</dbReference>
<dbReference type="InterPro" id="IPR003593">
    <property type="entry name" value="AAA+_ATPase"/>
</dbReference>
<dbReference type="InterPro" id="IPR011545">
    <property type="entry name" value="DEAD/DEAH_box_helicase_dom"/>
</dbReference>
<dbReference type="InterPro" id="IPR048772">
    <property type="entry name" value="Hel308-like_dom4"/>
</dbReference>
<dbReference type="InterPro" id="IPR050474">
    <property type="entry name" value="Hel308_SKI2-like"/>
</dbReference>
<dbReference type="InterPro" id="IPR014001">
    <property type="entry name" value="Helicase_ATP-bd"/>
</dbReference>
<dbReference type="InterPro" id="IPR001650">
    <property type="entry name" value="Helicase_C-like"/>
</dbReference>
<dbReference type="InterPro" id="IPR022965">
    <property type="entry name" value="Helicase_Hel308"/>
</dbReference>
<dbReference type="InterPro" id="IPR003583">
    <property type="entry name" value="Hlx-hairpin-Hlx_DNA-bd_motif"/>
</dbReference>
<dbReference type="InterPro" id="IPR027417">
    <property type="entry name" value="P-loop_NTPase"/>
</dbReference>
<dbReference type="InterPro" id="IPR036390">
    <property type="entry name" value="WH_DNA-bd_sf"/>
</dbReference>
<dbReference type="PANTHER" id="PTHR47961:SF10">
    <property type="entry name" value="ATP-DEPENDENT DNA HELICASE HEL308"/>
    <property type="match status" value="1"/>
</dbReference>
<dbReference type="PANTHER" id="PTHR47961">
    <property type="entry name" value="DNA POLYMERASE THETA, PUTATIVE (AFU_ORTHOLOGUE AFUA_1G05260)-RELATED"/>
    <property type="match status" value="1"/>
</dbReference>
<dbReference type="Pfam" id="PF00270">
    <property type="entry name" value="DEAD"/>
    <property type="match status" value="1"/>
</dbReference>
<dbReference type="Pfam" id="PF00271">
    <property type="entry name" value="Helicase_C"/>
    <property type="match status" value="1"/>
</dbReference>
<dbReference type="Pfam" id="PF21280">
    <property type="entry name" value="Helicase_dom4_arc"/>
    <property type="match status" value="1"/>
</dbReference>
<dbReference type="Pfam" id="PF14520">
    <property type="entry name" value="HHH_5"/>
    <property type="match status" value="1"/>
</dbReference>
<dbReference type="SMART" id="SM00382">
    <property type="entry name" value="AAA"/>
    <property type="match status" value="1"/>
</dbReference>
<dbReference type="SMART" id="SM00487">
    <property type="entry name" value="DEXDc"/>
    <property type="match status" value="1"/>
</dbReference>
<dbReference type="SMART" id="SM00490">
    <property type="entry name" value="HELICc"/>
    <property type="match status" value="1"/>
</dbReference>
<dbReference type="SMART" id="SM00278">
    <property type="entry name" value="HhH1"/>
    <property type="match status" value="2"/>
</dbReference>
<dbReference type="SUPFAM" id="SSF52540">
    <property type="entry name" value="P-loop containing nucleoside triphosphate hydrolases"/>
    <property type="match status" value="1"/>
</dbReference>
<dbReference type="SUPFAM" id="SSF158702">
    <property type="entry name" value="Sec63 N-terminal domain-like"/>
    <property type="match status" value="1"/>
</dbReference>
<dbReference type="SUPFAM" id="SSF46785">
    <property type="entry name" value="Winged helix' DNA-binding domain"/>
    <property type="match status" value="1"/>
</dbReference>
<dbReference type="PROSITE" id="PS51192">
    <property type="entry name" value="HELICASE_ATP_BIND_1"/>
    <property type="match status" value="1"/>
</dbReference>
<dbReference type="PROSITE" id="PS51194">
    <property type="entry name" value="HELICASE_CTER"/>
    <property type="match status" value="1"/>
</dbReference>
<organism>
    <name type="scientific">Aeropyrum pernix (strain ATCC 700893 / DSM 11879 / JCM 9820 / NBRC 100138 / K1)</name>
    <dbReference type="NCBI Taxonomy" id="272557"/>
    <lineage>
        <taxon>Archaea</taxon>
        <taxon>Thermoproteota</taxon>
        <taxon>Thermoprotei</taxon>
        <taxon>Desulfurococcales</taxon>
        <taxon>Desulfurococcaceae</taxon>
        <taxon>Aeropyrum</taxon>
    </lineage>
</organism>
<keyword id="KW-0067">ATP-binding</keyword>
<keyword id="KW-0227">DNA damage</keyword>
<keyword id="KW-0234">DNA repair</keyword>
<keyword id="KW-0238">DNA-binding</keyword>
<keyword id="KW-0347">Helicase</keyword>
<keyword id="KW-0378">Hydrolase</keyword>
<keyword id="KW-0413">Isomerase</keyword>
<keyword id="KW-0547">Nucleotide-binding</keyword>
<keyword id="KW-1185">Reference proteome</keyword>